<feature type="chain" id="PRO_1000147195" description="Protein TusB">
    <location>
        <begin position="1"/>
        <end position="95"/>
    </location>
</feature>
<reference key="1">
    <citation type="submission" date="2008-04" db="EMBL/GenBank/DDBJ databases">
        <title>Complete sequence of Yersinia pseudotuberculosis PB1/+.</title>
        <authorList>
            <person name="Copeland A."/>
            <person name="Lucas S."/>
            <person name="Lapidus A."/>
            <person name="Glavina del Rio T."/>
            <person name="Dalin E."/>
            <person name="Tice H."/>
            <person name="Bruce D."/>
            <person name="Goodwin L."/>
            <person name="Pitluck S."/>
            <person name="Munk A.C."/>
            <person name="Brettin T."/>
            <person name="Detter J.C."/>
            <person name="Han C."/>
            <person name="Tapia R."/>
            <person name="Schmutz J."/>
            <person name="Larimer F."/>
            <person name="Land M."/>
            <person name="Hauser L."/>
            <person name="Challacombe J.F."/>
            <person name="Green L."/>
            <person name="Lindler L.E."/>
            <person name="Nikolich M.P."/>
            <person name="Richardson P."/>
        </authorList>
    </citation>
    <scope>NUCLEOTIDE SEQUENCE [LARGE SCALE GENOMIC DNA]</scope>
    <source>
        <strain>PB1/+</strain>
    </source>
</reference>
<keyword id="KW-0963">Cytoplasm</keyword>
<keyword id="KW-0819">tRNA processing</keyword>
<comment type="function">
    <text evidence="1">Part of a sulfur-relay system required for 2-thiolation of 5-methylaminomethyl-2-thiouridine (mnm(5)s(2)U) at tRNA wobble positions.</text>
</comment>
<comment type="subunit">
    <text evidence="1">Heterohexamer, formed by a dimer of trimers. The hexameric TusBCD complex contains 2 copies each of TusB, TusC and TusD. The TusBCD complex interacts with TusE.</text>
</comment>
<comment type="subcellular location">
    <subcellularLocation>
        <location evidence="1">Cytoplasm</location>
    </subcellularLocation>
</comment>
<comment type="similarity">
    <text evidence="1">Belongs to the DsrH/TusB family.</text>
</comment>
<dbReference type="EMBL" id="CP001048">
    <property type="protein sequence ID" value="ACC90847.1"/>
    <property type="molecule type" value="Genomic_DNA"/>
</dbReference>
<dbReference type="RefSeq" id="WP_002212322.1">
    <property type="nucleotide sequence ID" value="NZ_CP009780.1"/>
</dbReference>
<dbReference type="SMR" id="B2K5N8"/>
<dbReference type="GeneID" id="57974404"/>
<dbReference type="KEGG" id="ypb:YPTS_3898"/>
<dbReference type="PATRIC" id="fig|502801.10.peg.3363"/>
<dbReference type="GO" id="GO:1990228">
    <property type="term" value="C:sulfurtransferase complex"/>
    <property type="evidence" value="ECO:0007669"/>
    <property type="project" value="TreeGrafter"/>
</dbReference>
<dbReference type="GO" id="GO:0002143">
    <property type="term" value="P:tRNA wobble position uridine thiolation"/>
    <property type="evidence" value="ECO:0007669"/>
    <property type="project" value="InterPro"/>
</dbReference>
<dbReference type="FunFam" id="3.40.1260.10:FF:000002">
    <property type="entry name" value="Sulfurtransferase TusB"/>
    <property type="match status" value="1"/>
</dbReference>
<dbReference type="Gene3D" id="3.40.1260.10">
    <property type="entry name" value="DsrEFH-like"/>
    <property type="match status" value="1"/>
</dbReference>
<dbReference type="HAMAP" id="MF_01564">
    <property type="entry name" value="Thiourid_synth_B"/>
    <property type="match status" value="1"/>
</dbReference>
<dbReference type="InterPro" id="IPR027396">
    <property type="entry name" value="DsrEFH-like"/>
</dbReference>
<dbReference type="InterPro" id="IPR023526">
    <property type="entry name" value="Sulphur_relay_TusB"/>
</dbReference>
<dbReference type="InterPro" id="IPR007215">
    <property type="entry name" value="Sulphur_relay_TusB/DsrH"/>
</dbReference>
<dbReference type="NCBIfam" id="NF010035">
    <property type="entry name" value="PRK13510.1"/>
    <property type="match status" value="1"/>
</dbReference>
<dbReference type="NCBIfam" id="TIGR03011">
    <property type="entry name" value="sulf_tusB_dsrH"/>
    <property type="match status" value="1"/>
</dbReference>
<dbReference type="PANTHER" id="PTHR37526">
    <property type="entry name" value="PROTEIN TUSB"/>
    <property type="match status" value="1"/>
</dbReference>
<dbReference type="PANTHER" id="PTHR37526:SF1">
    <property type="entry name" value="PROTEIN TUSB"/>
    <property type="match status" value="1"/>
</dbReference>
<dbReference type="Pfam" id="PF04077">
    <property type="entry name" value="DsrH"/>
    <property type="match status" value="1"/>
</dbReference>
<dbReference type="SUPFAM" id="SSF75169">
    <property type="entry name" value="DsrEFH-like"/>
    <property type="match status" value="1"/>
</dbReference>
<protein>
    <recommendedName>
        <fullName evidence="1">Protein TusB</fullName>
    </recommendedName>
    <alternativeName>
        <fullName evidence="1">tRNA 2-thiouridine synthesizing protein B</fullName>
    </alternativeName>
</protein>
<proteinExistence type="inferred from homology"/>
<gene>
    <name evidence="1" type="primary">tusB</name>
    <name type="ordered locus">YPTS_3898</name>
</gene>
<sequence>MLYTVSHSPYHCDLSALLRLATSEDDILLLQDGVIAALKESETLKLLLNNPASLFVLEDDVIARGLVGQISDNATLISYTHFVDLTLRHQQQLAW</sequence>
<organism>
    <name type="scientific">Yersinia pseudotuberculosis serotype IB (strain PB1/+)</name>
    <dbReference type="NCBI Taxonomy" id="502801"/>
    <lineage>
        <taxon>Bacteria</taxon>
        <taxon>Pseudomonadati</taxon>
        <taxon>Pseudomonadota</taxon>
        <taxon>Gammaproteobacteria</taxon>
        <taxon>Enterobacterales</taxon>
        <taxon>Yersiniaceae</taxon>
        <taxon>Yersinia</taxon>
    </lineage>
</organism>
<accession>B2K5N8</accession>
<evidence type="ECO:0000255" key="1">
    <source>
        <dbReference type="HAMAP-Rule" id="MF_01564"/>
    </source>
</evidence>
<name>TUSB_YERPB</name>